<dbReference type="EMBL" id="AB087728">
    <property type="protein sequence ID" value="BAD02835.1"/>
    <property type="molecule type" value="mRNA"/>
</dbReference>
<dbReference type="GO" id="GO:0005737">
    <property type="term" value="C:cytoplasm"/>
    <property type="evidence" value="ECO:0007669"/>
    <property type="project" value="TreeGrafter"/>
</dbReference>
<dbReference type="GO" id="GO:0005615">
    <property type="term" value="C:extracellular space"/>
    <property type="evidence" value="ECO:0007669"/>
    <property type="project" value="TreeGrafter"/>
</dbReference>
<dbReference type="GO" id="GO:0005179">
    <property type="term" value="F:hormone activity"/>
    <property type="evidence" value="ECO:0007669"/>
    <property type="project" value="UniProtKB-KW"/>
</dbReference>
<dbReference type="GO" id="GO:0051427">
    <property type="term" value="F:hormone receptor binding"/>
    <property type="evidence" value="ECO:0007669"/>
    <property type="project" value="TreeGrafter"/>
</dbReference>
<dbReference type="GO" id="GO:0097746">
    <property type="term" value="P:blood vessel diameter maintenance"/>
    <property type="evidence" value="ECO:0007669"/>
    <property type="project" value="UniProtKB-KW"/>
</dbReference>
<dbReference type="GO" id="GO:0006182">
    <property type="term" value="P:cGMP biosynthetic process"/>
    <property type="evidence" value="ECO:0000250"/>
    <property type="project" value="UniProtKB"/>
</dbReference>
<dbReference type="GO" id="GO:0019934">
    <property type="term" value="P:cGMP-mediated signaling"/>
    <property type="evidence" value="ECO:0007669"/>
    <property type="project" value="TreeGrafter"/>
</dbReference>
<dbReference type="GO" id="GO:0003085">
    <property type="term" value="P:negative regulation of systemic arterial blood pressure"/>
    <property type="evidence" value="ECO:0007669"/>
    <property type="project" value="TreeGrafter"/>
</dbReference>
<dbReference type="GO" id="GO:0007218">
    <property type="term" value="P:neuropeptide signaling pathway"/>
    <property type="evidence" value="ECO:0007669"/>
    <property type="project" value="TreeGrafter"/>
</dbReference>
<dbReference type="GO" id="GO:0007168">
    <property type="term" value="P:receptor guanylyl cyclase signaling pathway"/>
    <property type="evidence" value="ECO:0000250"/>
    <property type="project" value="UniProtKB"/>
</dbReference>
<dbReference type="InterPro" id="IPR000663">
    <property type="entry name" value="Natr_peptide"/>
</dbReference>
<dbReference type="InterPro" id="IPR030480">
    <property type="entry name" value="Natr_peptide_CS"/>
</dbReference>
<dbReference type="InterPro" id="IPR050787">
    <property type="entry name" value="Natriuretic_peptide"/>
</dbReference>
<dbReference type="InterPro" id="IPR002408">
    <property type="entry name" value="Natriuretic_peptide_brain"/>
</dbReference>
<dbReference type="PANTHER" id="PTHR14066">
    <property type="entry name" value="ATRIAL NATRIURETIC FACTOR PRECURSOR"/>
    <property type="match status" value="1"/>
</dbReference>
<dbReference type="PANTHER" id="PTHR14066:SF10">
    <property type="entry name" value="NATRIURETIC PEPTIDES B"/>
    <property type="match status" value="1"/>
</dbReference>
<dbReference type="Pfam" id="PF00212">
    <property type="entry name" value="ANP"/>
    <property type="match status" value="1"/>
</dbReference>
<dbReference type="PRINTS" id="PR00712">
    <property type="entry name" value="BNATPEPTIDE"/>
</dbReference>
<dbReference type="SMART" id="SM00183">
    <property type="entry name" value="NAT_PEP"/>
    <property type="match status" value="1"/>
</dbReference>
<dbReference type="PROSITE" id="PS00263">
    <property type="entry name" value="NATRIURETIC_PEPTIDE"/>
    <property type="match status" value="1"/>
</dbReference>
<proteinExistence type="evidence at transcript level"/>
<sequence>MMLKTVIYTGVLFLICNKVLVRADPLYSPYSSKDLANLKTLLERFEDTLGQDEGNDNQQDYDIANPEAEGPQAGSPWDRERERQWPASDYKKPQEGYQSQSSRLRDLLMAPRNNRGSSGCFGSRIDRIGSMSSMGCGGSRKG</sequence>
<keyword id="KW-1015">Disulfide bond</keyword>
<keyword id="KW-0372">Hormone</keyword>
<keyword id="KW-0964">Secreted</keyword>
<keyword id="KW-0732">Signal</keyword>
<keyword id="KW-0838">Vasoactive</keyword>
<gene>
    <name type="primary">nppa</name>
    <name type="synonym">anp</name>
</gene>
<organism>
    <name type="scientific">Acipenser transmontanus</name>
    <name type="common">White sturgeon</name>
    <dbReference type="NCBI Taxonomy" id="7904"/>
    <lineage>
        <taxon>Eukaryota</taxon>
        <taxon>Metazoa</taxon>
        <taxon>Chordata</taxon>
        <taxon>Craniata</taxon>
        <taxon>Vertebrata</taxon>
        <taxon>Euteleostomi</taxon>
        <taxon>Actinopterygii</taxon>
        <taxon>Chondrostei</taxon>
        <taxon>Acipenseriformes</taxon>
        <taxon>Acipenseridae</taxon>
        <taxon>Acipenser</taxon>
    </lineage>
</organism>
<evidence type="ECO:0000250" key="1"/>
<evidence type="ECO:0000250" key="2">
    <source>
        <dbReference type="UniProtKB" id="P18144"/>
    </source>
</evidence>
<evidence type="ECO:0000255" key="3"/>
<evidence type="ECO:0000256" key="4">
    <source>
        <dbReference type="SAM" id="MobiDB-lite"/>
    </source>
</evidence>
<evidence type="ECO:0000269" key="5">
    <source>
    </source>
</evidence>
<evidence type="ECO:0000305" key="6"/>
<reference key="1">
    <citation type="journal article" date="2004" name="J. Mol. Endocrinol.">
        <title>Four natriuretic peptides (ANP, BNP, VNP and CNP) coexist in the sturgeon: identification of BNP in fish lineage.</title>
        <authorList>
            <person name="Kawakoshi A."/>
            <person name="Hyodo S."/>
            <person name="Inoue K."/>
            <person name="Kobayashi Y."/>
            <person name="Takei Y."/>
        </authorList>
    </citation>
    <scope>NUCLEOTIDE SEQUENCE [MRNA]</scope>
    <scope>TISSUE SPECIFICITY</scope>
    <source>
        <tissue>Heart atrium</tissue>
    </source>
</reference>
<feature type="signal peptide" evidence="3">
    <location>
        <begin position="1"/>
        <end position="23"/>
    </location>
</feature>
<feature type="propeptide" id="PRO_0000001517" evidence="6">
    <location>
        <begin position="24"/>
        <end position="112"/>
    </location>
</feature>
<feature type="peptide" id="PRO_0000001518" description="Atrial natriuretic factor" evidence="2">
    <location>
        <begin position="113"/>
        <end position="142"/>
    </location>
</feature>
<feature type="region of interest" description="Disordered" evidence="4">
    <location>
        <begin position="47"/>
        <end position="123"/>
    </location>
</feature>
<feature type="compositionally biased region" description="Basic and acidic residues" evidence="4">
    <location>
        <begin position="77"/>
        <end position="94"/>
    </location>
</feature>
<feature type="disulfide bond" evidence="2">
    <location>
        <begin position="120"/>
        <end position="136"/>
    </location>
</feature>
<accession>P83964</accession>
<name>ANF_ACITR</name>
<comment type="function">
    <text evidence="1">Hormone playing a key role in cardiovascular homeostasis through regulation of natriuresis, diuresis, and vasodilation. Has a cGMP-stimulating activity (By similarity).</text>
</comment>
<comment type="subcellular location">
    <subcellularLocation>
        <location>Secreted</location>
    </subcellularLocation>
</comment>
<comment type="tissue specificity">
    <text evidence="5">Expressed in heart atrium and to a lower extent in heart ventricle, but not in brain.</text>
</comment>
<comment type="PTM">
    <text evidence="1">Cleaved upon secretion to produce the functional hormone.</text>
</comment>
<comment type="similarity">
    <text evidence="6">Belongs to the natriuretic peptide family.</text>
</comment>
<protein>
    <recommendedName>
        <fullName>Natriuretic peptides A</fullName>
    </recommendedName>
    <alternativeName>
        <fullName>Prepronatriodilatin</fullName>
    </alternativeName>
    <component>
        <recommendedName>
            <fullName>Atrial natriuretic factor</fullName>
            <shortName>ANF</shortName>
        </recommendedName>
        <alternativeName>
            <fullName>Atrial natriuretic peptide</fullName>
            <shortName>ANP</shortName>
        </alternativeName>
    </component>
</protein>